<comment type="function">
    <text evidence="1">Peptide chain release factor 1 directs the termination of translation in response to the peptide chain termination codons UAG and UAA.</text>
</comment>
<comment type="subcellular location">
    <subcellularLocation>
        <location evidence="1">Cytoplasm</location>
    </subcellularLocation>
</comment>
<comment type="PTM">
    <text evidence="1">Methylated by PrmC. Methylation increases the termination efficiency of RF1.</text>
</comment>
<comment type="similarity">
    <text evidence="1">Belongs to the prokaryotic/mitochondrial release factor family.</text>
</comment>
<proteinExistence type="inferred from homology"/>
<name>RF1_VIBCH</name>
<feature type="chain" id="PRO_0000177766" description="Peptide chain release factor 1">
    <location>
        <begin position="1"/>
        <end position="362"/>
    </location>
</feature>
<feature type="region of interest" description="Disordered" evidence="2">
    <location>
        <begin position="289"/>
        <end position="308"/>
    </location>
</feature>
<feature type="modified residue" description="N5-methylglutamine" evidence="1">
    <location>
        <position position="237"/>
    </location>
</feature>
<sequence>MKASILSKLESLVERYEEVQHLLGDPTVIGDQNKFRALSKEYSQLEEITQCFQAYQQAKEDLVAAEEMAQEDDAEMREMAQDEIKAAKAAIERLTDELQILLLPKDPNDDRNCFLEIRAGAGGDEAGIFAGDLFRMYSRFAEKKGWRIEVMSSSEAEHGGYKEMIAKVNGDGAYGTLKFESGGHRVQRVPATEAQGRIHTSACTVAVMPEIPEAEIPEIKASDLKIDTFRSSGAGGQHVNTTDSAIRITHLPTGIVVECQDERSQHKNKAKAMSVLAARIAQAEESKRAAEISDTRRNLLGSGDRSDRIRTYNYPQGRVSDHRINLTVYRLTEVMEGDMQSLIDPVIHEHQADQLAALADQN</sequence>
<organism>
    <name type="scientific">Vibrio cholerae serotype O1 (strain ATCC 39315 / El Tor Inaba N16961)</name>
    <dbReference type="NCBI Taxonomy" id="243277"/>
    <lineage>
        <taxon>Bacteria</taxon>
        <taxon>Pseudomonadati</taxon>
        <taxon>Pseudomonadota</taxon>
        <taxon>Gammaproteobacteria</taxon>
        <taxon>Vibrionales</taxon>
        <taxon>Vibrionaceae</taxon>
        <taxon>Vibrio</taxon>
    </lineage>
</organism>
<evidence type="ECO:0000255" key="1">
    <source>
        <dbReference type="HAMAP-Rule" id="MF_00093"/>
    </source>
</evidence>
<evidence type="ECO:0000256" key="2">
    <source>
        <dbReference type="SAM" id="MobiDB-lite"/>
    </source>
</evidence>
<reference key="1">
    <citation type="journal article" date="2000" name="Nature">
        <title>DNA sequence of both chromosomes of the cholera pathogen Vibrio cholerae.</title>
        <authorList>
            <person name="Heidelberg J.F."/>
            <person name="Eisen J.A."/>
            <person name="Nelson W.C."/>
            <person name="Clayton R.A."/>
            <person name="Gwinn M.L."/>
            <person name="Dodson R.J."/>
            <person name="Haft D.H."/>
            <person name="Hickey E.K."/>
            <person name="Peterson J.D."/>
            <person name="Umayam L.A."/>
            <person name="Gill S.R."/>
            <person name="Nelson K.E."/>
            <person name="Read T.D."/>
            <person name="Tettelin H."/>
            <person name="Richardson D.L."/>
            <person name="Ermolaeva M.D."/>
            <person name="Vamathevan J.J."/>
            <person name="Bass S."/>
            <person name="Qin H."/>
            <person name="Dragoi I."/>
            <person name="Sellers P."/>
            <person name="McDonald L.A."/>
            <person name="Utterback T.R."/>
            <person name="Fleischmann R.D."/>
            <person name="Nierman W.C."/>
            <person name="White O."/>
            <person name="Salzberg S.L."/>
            <person name="Smith H.O."/>
            <person name="Colwell R.R."/>
            <person name="Mekalanos J.J."/>
            <person name="Venter J.C."/>
            <person name="Fraser C.M."/>
        </authorList>
    </citation>
    <scope>NUCLEOTIDE SEQUENCE [LARGE SCALE GENOMIC DNA]</scope>
    <source>
        <strain>ATCC 39315 / El Tor Inaba N16961</strain>
    </source>
</reference>
<keyword id="KW-0963">Cytoplasm</keyword>
<keyword id="KW-0488">Methylation</keyword>
<keyword id="KW-0648">Protein biosynthesis</keyword>
<keyword id="KW-1185">Reference proteome</keyword>
<dbReference type="EMBL" id="AE003852">
    <property type="protein sequence ID" value="AAF95324.1"/>
    <property type="molecule type" value="Genomic_DNA"/>
</dbReference>
<dbReference type="PIR" id="B82109">
    <property type="entry name" value="B82109"/>
</dbReference>
<dbReference type="RefSeq" id="NP_231810.1">
    <property type="nucleotide sequence ID" value="NC_002505.1"/>
</dbReference>
<dbReference type="RefSeq" id="WP_000647701.1">
    <property type="nucleotide sequence ID" value="NZ_LT906614.1"/>
</dbReference>
<dbReference type="SMR" id="Q9KQ25"/>
<dbReference type="STRING" id="243277.VC_2179"/>
<dbReference type="DNASU" id="2613315"/>
<dbReference type="EnsemblBacteria" id="AAF95324">
    <property type="protein sequence ID" value="AAF95324"/>
    <property type="gene ID" value="VC_2179"/>
</dbReference>
<dbReference type="GeneID" id="89513845"/>
<dbReference type="KEGG" id="vch:VC_2179"/>
<dbReference type="PATRIC" id="fig|243277.26.peg.2077"/>
<dbReference type="eggNOG" id="COG0216">
    <property type="taxonomic scope" value="Bacteria"/>
</dbReference>
<dbReference type="HOGENOM" id="CLU_036856_0_1_6"/>
<dbReference type="Proteomes" id="UP000000584">
    <property type="component" value="Chromosome 1"/>
</dbReference>
<dbReference type="GO" id="GO:0005737">
    <property type="term" value="C:cytoplasm"/>
    <property type="evidence" value="ECO:0007669"/>
    <property type="project" value="UniProtKB-SubCell"/>
</dbReference>
<dbReference type="GO" id="GO:0016149">
    <property type="term" value="F:translation release factor activity, codon specific"/>
    <property type="evidence" value="ECO:0007669"/>
    <property type="project" value="UniProtKB-UniRule"/>
</dbReference>
<dbReference type="FunFam" id="3.30.160.20:FF:000004">
    <property type="entry name" value="Peptide chain release factor 1"/>
    <property type="match status" value="1"/>
</dbReference>
<dbReference type="FunFam" id="3.30.70.1660:FF:000002">
    <property type="entry name" value="Peptide chain release factor 1"/>
    <property type="match status" value="1"/>
</dbReference>
<dbReference type="FunFam" id="3.30.70.1660:FF:000004">
    <property type="entry name" value="Peptide chain release factor 1"/>
    <property type="match status" value="1"/>
</dbReference>
<dbReference type="Gene3D" id="3.30.160.20">
    <property type="match status" value="1"/>
</dbReference>
<dbReference type="Gene3D" id="3.30.70.1660">
    <property type="match status" value="1"/>
</dbReference>
<dbReference type="Gene3D" id="6.10.140.1950">
    <property type="match status" value="1"/>
</dbReference>
<dbReference type="HAMAP" id="MF_00093">
    <property type="entry name" value="Rel_fac_1"/>
    <property type="match status" value="1"/>
</dbReference>
<dbReference type="InterPro" id="IPR005139">
    <property type="entry name" value="PCRF"/>
</dbReference>
<dbReference type="InterPro" id="IPR000352">
    <property type="entry name" value="Pep_chain_release_fac_I"/>
</dbReference>
<dbReference type="InterPro" id="IPR045853">
    <property type="entry name" value="Pep_chain_release_fac_I_sf"/>
</dbReference>
<dbReference type="InterPro" id="IPR050057">
    <property type="entry name" value="Prokaryotic/Mito_RF"/>
</dbReference>
<dbReference type="InterPro" id="IPR004373">
    <property type="entry name" value="RF-1"/>
</dbReference>
<dbReference type="NCBIfam" id="TIGR00019">
    <property type="entry name" value="prfA"/>
    <property type="match status" value="1"/>
</dbReference>
<dbReference type="NCBIfam" id="NF001859">
    <property type="entry name" value="PRK00591.1"/>
    <property type="match status" value="1"/>
</dbReference>
<dbReference type="PANTHER" id="PTHR43804">
    <property type="entry name" value="LD18447P"/>
    <property type="match status" value="1"/>
</dbReference>
<dbReference type="PANTHER" id="PTHR43804:SF7">
    <property type="entry name" value="LD18447P"/>
    <property type="match status" value="1"/>
</dbReference>
<dbReference type="Pfam" id="PF03462">
    <property type="entry name" value="PCRF"/>
    <property type="match status" value="1"/>
</dbReference>
<dbReference type="Pfam" id="PF00472">
    <property type="entry name" value="RF-1"/>
    <property type="match status" value="1"/>
</dbReference>
<dbReference type="SMART" id="SM00937">
    <property type="entry name" value="PCRF"/>
    <property type="match status" value="1"/>
</dbReference>
<dbReference type="SUPFAM" id="SSF75620">
    <property type="entry name" value="Release factor"/>
    <property type="match status" value="1"/>
</dbReference>
<dbReference type="PROSITE" id="PS00745">
    <property type="entry name" value="RF_PROK_I"/>
    <property type="match status" value="1"/>
</dbReference>
<gene>
    <name evidence="1" type="primary">prfA</name>
    <name type="ordered locus">VC_2179</name>
</gene>
<accession>Q9KQ25</accession>
<protein>
    <recommendedName>
        <fullName evidence="1">Peptide chain release factor 1</fullName>
        <shortName evidence="1">RF-1</shortName>
    </recommendedName>
</protein>